<accession>Q196X9</accession>
<sequence length="175" mass="19279">MSFMVPTTFAAPQTYRLPCPTIQVQTLGPIVPSVWTIVSRYEPFRQLVVQAHLQDFLNDPQTIVTVMAPLCIPTSQTTQLVCTDASTSPTRVSVLDLSFEASLAMVQSVSVPGVLTTDTMNQSNYTAYRTHHPYRMLHVKSKPTILLNNTSHIVVGNVVASNGLVHIVDQFPMPI</sequence>
<feature type="chain" id="PRO_0000377806" description="Putative FAS1 domain-containing protein 081L">
    <location>
        <begin position="1"/>
        <end position="175"/>
    </location>
</feature>
<feature type="domain" description="FAS1">
    <location>
        <begin position="28"/>
        <end position="172"/>
    </location>
</feature>
<dbReference type="EMBL" id="DQ643392">
    <property type="protein sequence ID" value="ABF82111.1"/>
    <property type="molecule type" value="Genomic_DNA"/>
</dbReference>
<dbReference type="RefSeq" id="YP_654653.1">
    <property type="nucleotide sequence ID" value="NC_008187.1"/>
</dbReference>
<dbReference type="SMR" id="Q196X9"/>
<dbReference type="KEGG" id="vg:4156292"/>
<dbReference type="OrthoDB" id="14819at10239"/>
<dbReference type="Proteomes" id="UP000001358">
    <property type="component" value="Genome"/>
</dbReference>
<dbReference type="Gene3D" id="2.30.180.10">
    <property type="entry name" value="FAS1 domain"/>
    <property type="match status" value="1"/>
</dbReference>
<dbReference type="InterPro" id="IPR036378">
    <property type="entry name" value="FAS1_dom_sf"/>
</dbReference>
<dbReference type="InterPro" id="IPR000782">
    <property type="entry name" value="FAS1_domain"/>
</dbReference>
<dbReference type="Pfam" id="PF02469">
    <property type="entry name" value="Fasciclin"/>
    <property type="match status" value="1"/>
</dbReference>
<dbReference type="SUPFAM" id="SSF82153">
    <property type="entry name" value="FAS1 domain"/>
    <property type="match status" value="1"/>
</dbReference>
<organism>
    <name type="scientific">Invertebrate iridescent virus 3</name>
    <name type="common">IIV-3</name>
    <name type="synonym">Mosquito iridescent virus</name>
    <dbReference type="NCBI Taxonomy" id="345201"/>
    <lineage>
        <taxon>Viruses</taxon>
        <taxon>Varidnaviria</taxon>
        <taxon>Bamfordvirae</taxon>
        <taxon>Nucleocytoviricota</taxon>
        <taxon>Megaviricetes</taxon>
        <taxon>Pimascovirales</taxon>
        <taxon>Iridoviridae</taxon>
        <taxon>Betairidovirinae</taxon>
        <taxon>Chloriridovirus</taxon>
    </lineage>
</organism>
<name>081L_IIV3</name>
<gene>
    <name type="ORF">IIV3-081L</name>
</gene>
<protein>
    <recommendedName>
        <fullName>Putative FAS1 domain-containing protein 081L</fullName>
    </recommendedName>
</protein>
<proteinExistence type="predicted"/>
<reference key="1">
    <citation type="journal article" date="2006" name="J. Virol.">
        <title>Genome of invertebrate iridescent virus type 3 (mosquito iridescent virus).</title>
        <authorList>
            <person name="Delhon G."/>
            <person name="Tulman E.R."/>
            <person name="Afonso C.L."/>
            <person name="Lu Z."/>
            <person name="Becnel J.J."/>
            <person name="Moser B.A."/>
            <person name="Kutish G.F."/>
            <person name="Rock D.L."/>
        </authorList>
    </citation>
    <scope>NUCLEOTIDE SEQUENCE [LARGE SCALE GENOMIC DNA]</scope>
</reference>
<keyword id="KW-1185">Reference proteome</keyword>
<organismHost>
    <name type="scientific">Aedes vexans</name>
    <name type="common">Inland floodwater mosquito</name>
    <name type="synonym">Culex vexans</name>
    <dbReference type="NCBI Taxonomy" id="7163"/>
</organismHost>
<organismHost>
    <name type="scientific">Culex territans</name>
    <dbReference type="NCBI Taxonomy" id="42431"/>
</organismHost>
<organismHost>
    <name type="scientific">Culiseta annulata</name>
    <dbReference type="NCBI Taxonomy" id="332058"/>
</organismHost>
<organismHost>
    <name type="scientific">Ochlerotatus sollicitans</name>
    <name type="common">eastern saltmarsh mosquito</name>
    <dbReference type="NCBI Taxonomy" id="310513"/>
</organismHost>
<organismHost>
    <name type="scientific">Ochlerotatus taeniorhynchus</name>
    <name type="common">Black salt marsh mosquito</name>
    <name type="synonym">Aedes taeniorhynchus</name>
    <dbReference type="NCBI Taxonomy" id="329105"/>
</organismHost>
<organismHost>
    <name type="scientific">Psorophora ferox</name>
    <dbReference type="NCBI Taxonomy" id="7183"/>
</organismHost>